<protein>
    <recommendedName>
        <fullName evidence="6">Sorbitol dehydrogenase 1</fullName>
        <shortName>SDH 1</shortName>
        <ecNumber evidence="3">1.1.1.-</ecNumber>
    </recommendedName>
    <alternativeName>
        <fullName evidence="5">Polyol dehydrogenase</fullName>
    </alternativeName>
    <alternativeName>
        <fullName>Xylitol dehydrogenase</fullName>
        <ecNumber evidence="3">1.1.1.9</ecNumber>
    </alternativeName>
</protein>
<sequence length="357" mass="38166">MSQNSNPAVVLEKVGDIAIEQRPIPTIKDPHYVKLAIKATGICGSDIHYYRSGGIGKYILKAPMVLGHESSGQVVEVGDAVTRVKVGDRVAIEPGVPSRYSDETKEGRYNLCPHMAFAATPPIDGTLVKYYLSPEDFLVKLPEGVSYEEGACVEPLSVGVHSNKLAGVRFGTKVVVFGAGPVGLLTGAVARAFGATDVIFVDVFDNKLQRAKDFGATNTFNSSQFSTDKAQDLADGVQKLLGGNHADVVFECSGADVCIDAAVKTTKVGGTMVQVGMGKNYTNFPIAEVSGKEMKLIGCFRYSFGDYRDAVNLVATGKVNVKPLITHKFKFEDAAKAYDYNIAHGGEVVKTIIFGPE</sequence>
<name>DHSO1_YEAST</name>
<reference key="1">
    <citation type="journal article" date="1994" name="Gene">
        <title>Cloning and sequence determination of the gene encoding sorbitol dehydrogenase from Saccharomyces cerevisiae.</title>
        <authorList>
            <person name="Sarthy A.V."/>
            <person name="Schopp C."/>
            <person name="Idler K.B."/>
        </authorList>
    </citation>
    <scope>NUCLEOTIDE SEQUENCE [GENOMIC DNA]</scope>
    <scope>FUNCTION</scope>
    <scope>CATALYTIC ACTIVITY</scope>
    <scope>SUBSTRATE SPECIFICITY</scope>
    <scope>INDUCTION BY SORBITOL</scope>
</reference>
<reference key="2">
    <citation type="journal article" date="1996" name="EMBO J.">
        <title>Complete nucleotide sequence of Saccharomyces cerevisiae chromosome X.</title>
        <authorList>
            <person name="Galibert F."/>
            <person name="Alexandraki D."/>
            <person name="Baur A."/>
            <person name="Boles E."/>
            <person name="Chalwatzis N."/>
            <person name="Chuat J.-C."/>
            <person name="Coster F."/>
            <person name="Cziepluch C."/>
            <person name="de Haan M."/>
            <person name="Domdey H."/>
            <person name="Durand P."/>
            <person name="Entian K.-D."/>
            <person name="Gatius M."/>
            <person name="Goffeau A."/>
            <person name="Grivell L.A."/>
            <person name="Hennemann A."/>
            <person name="Herbert C.J."/>
            <person name="Heumann K."/>
            <person name="Hilger F."/>
            <person name="Hollenberg C.P."/>
            <person name="Huang M.-E."/>
            <person name="Jacq C."/>
            <person name="Jauniaux J.-C."/>
            <person name="Katsoulou C."/>
            <person name="Kirchrath L."/>
            <person name="Kleine K."/>
            <person name="Kordes E."/>
            <person name="Koetter P."/>
            <person name="Liebl S."/>
            <person name="Louis E.J."/>
            <person name="Manus V."/>
            <person name="Mewes H.-W."/>
            <person name="Miosga T."/>
            <person name="Obermaier B."/>
            <person name="Perea J."/>
            <person name="Pohl T.M."/>
            <person name="Portetelle D."/>
            <person name="Pujol A."/>
            <person name="Purnelle B."/>
            <person name="Ramezani Rad M."/>
            <person name="Rasmussen S.W."/>
            <person name="Rose M."/>
            <person name="Rossau R."/>
            <person name="Schaaff-Gerstenschlaeger I."/>
            <person name="Smits P.H.M."/>
            <person name="Scarcez T."/>
            <person name="Soriano N."/>
            <person name="To Van D."/>
            <person name="Tzermia M."/>
            <person name="Van Broekhoven A."/>
            <person name="Vandenbol M."/>
            <person name="Wedler H."/>
            <person name="von Wettstein D."/>
            <person name="Wambutt R."/>
            <person name="Zagulski M."/>
            <person name="Zollner A."/>
            <person name="Karpfinger-Hartl L."/>
        </authorList>
    </citation>
    <scope>NUCLEOTIDE SEQUENCE [LARGE SCALE GENOMIC DNA]</scope>
    <source>
        <strain>ATCC 204508 / S288c</strain>
    </source>
</reference>
<reference key="3">
    <citation type="journal article" date="2014" name="G3 (Bethesda)">
        <title>The reference genome sequence of Saccharomyces cerevisiae: Then and now.</title>
        <authorList>
            <person name="Engel S.R."/>
            <person name="Dietrich F.S."/>
            <person name="Fisk D.G."/>
            <person name="Binkley G."/>
            <person name="Balakrishnan R."/>
            <person name="Costanzo M.C."/>
            <person name="Dwight S.S."/>
            <person name="Hitz B.C."/>
            <person name="Karra K."/>
            <person name="Nash R.S."/>
            <person name="Weng S."/>
            <person name="Wong E.D."/>
            <person name="Lloyd P."/>
            <person name="Skrzypek M.S."/>
            <person name="Miyasato S.R."/>
            <person name="Simison M."/>
            <person name="Cherry J.M."/>
        </authorList>
    </citation>
    <scope>GENOME REANNOTATION</scope>
    <source>
        <strain>ATCC 204508 / S288c</strain>
    </source>
</reference>
<reference key="4">
    <citation type="journal article" date="2007" name="Genome Res.">
        <title>Approaching a complete repository of sequence-verified protein-encoding clones for Saccharomyces cerevisiae.</title>
        <authorList>
            <person name="Hu Y."/>
            <person name="Rolfs A."/>
            <person name="Bhullar B."/>
            <person name="Murthy T.V.S."/>
            <person name="Zhu C."/>
            <person name="Berger M.F."/>
            <person name="Camargo A.A."/>
            <person name="Kelley F."/>
            <person name="McCarron S."/>
            <person name="Jepson D."/>
            <person name="Richardson A."/>
            <person name="Raphael J."/>
            <person name="Moreira D."/>
            <person name="Taycher E."/>
            <person name="Zuo D."/>
            <person name="Mohr S."/>
            <person name="Kane M.F."/>
            <person name="Williamson J."/>
            <person name="Simpson A.J.G."/>
            <person name="Bulyk M.L."/>
            <person name="Harlow E."/>
            <person name="Marsischky G."/>
            <person name="Kolodner R.D."/>
            <person name="LaBaer J."/>
        </authorList>
    </citation>
    <scope>NUCLEOTIDE SEQUENCE [GENOMIC DNA]</scope>
    <source>
        <strain>ATCC 204508 / S288c</strain>
    </source>
</reference>
<gene>
    <name type="primary">SOR1</name>
    <name evidence="4" type="synonym">SDH1</name>
    <name type="ordered locus">YJR159W</name>
    <name type="ORF">J2395</name>
</gene>
<comment type="function">
    <text evidence="3">Polyol dehydrogenase that catalyzes the reversible NAD(+)-dependent oxidation of various sugar alcohols. Is active with D-sorbitol (D-glucitol) and xylitol as substrates, leading to the C2-oxidized product D-fructose and D-xylulose, respectively. Is likely involved in the utilization of D-sorbitol as a sole carbon source for growth. Has no activity on mannitol and primary alcohols such as ethanol.</text>
</comment>
<comment type="catalytic activity">
    <reaction evidence="3">
        <text>keto-D-fructose + NADH + H(+) = D-sorbitol + NAD(+)</text>
        <dbReference type="Rhea" id="RHEA:33031"/>
        <dbReference type="ChEBI" id="CHEBI:15378"/>
        <dbReference type="ChEBI" id="CHEBI:17924"/>
        <dbReference type="ChEBI" id="CHEBI:48095"/>
        <dbReference type="ChEBI" id="CHEBI:57540"/>
        <dbReference type="ChEBI" id="CHEBI:57945"/>
    </reaction>
</comment>
<comment type="catalytic activity">
    <reaction evidence="3">
        <text>xylitol + NAD(+) = D-xylulose + NADH + H(+)</text>
        <dbReference type="Rhea" id="RHEA:20433"/>
        <dbReference type="ChEBI" id="CHEBI:15378"/>
        <dbReference type="ChEBI" id="CHEBI:17140"/>
        <dbReference type="ChEBI" id="CHEBI:17151"/>
        <dbReference type="ChEBI" id="CHEBI:57540"/>
        <dbReference type="ChEBI" id="CHEBI:57945"/>
        <dbReference type="EC" id="1.1.1.9"/>
    </reaction>
</comment>
<comment type="cofactor">
    <cofactor evidence="2">
        <name>Zn(2+)</name>
        <dbReference type="ChEBI" id="CHEBI:29105"/>
    </cofactor>
    <text evidence="2">Binds 1 zinc ion per subunit.</text>
</comment>
<comment type="subunit">
    <text evidence="2">Homotetramer.</text>
</comment>
<comment type="induction">
    <text evidence="3">Induced by sorbitol.</text>
</comment>
<comment type="similarity">
    <text evidence="5">Belongs to the zinc-containing alcohol dehydrogenase family.</text>
</comment>
<feature type="chain" id="PRO_0000160821" description="Sorbitol dehydrogenase 1">
    <location>
        <begin position="1"/>
        <end position="357"/>
    </location>
</feature>
<feature type="binding site" evidence="2">
    <location>
        <position position="43"/>
    </location>
    <ligand>
        <name>Zn(2+)</name>
        <dbReference type="ChEBI" id="CHEBI:29105"/>
        <note>catalytic</note>
    </ligand>
</feature>
<feature type="binding site" evidence="1">
    <location>
        <position position="49"/>
    </location>
    <ligand>
        <name>substrate</name>
    </ligand>
</feature>
<feature type="binding site" evidence="2">
    <location>
        <position position="68"/>
    </location>
    <ligand>
        <name>Zn(2+)</name>
        <dbReference type="ChEBI" id="CHEBI:29105"/>
        <note>catalytic</note>
    </ligand>
</feature>
<feature type="binding site" evidence="2">
    <location>
        <position position="69"/>
    </location>
    <ligand>
        <name>Zn(2+)</name>
        <dbReference type="ChEBI" id="CHEBI:29105"/>
        <note>catalytic</note>
    </ligand>
</feature>
<feature type="binding site" evidence="1">
    <location>
        <position position="154"/>
    </location>
    <ligand>
        <name>substrate</name>
    </ligand>
</feature>
<feature type="binding site" evidence="2">
    <location>
        <position position="202"/>
    </location>
    <ligand>
        <name>NAD(+)</name>
        <dbReference type="ChEBI" id="CHEBI:57540"/>
    </ligand>
</feature>
<feature type="binding site" evidence="2">
    <location>
        <position position="207"/>
    </location>
    <ligand>
        <name>NAD(+)</name>
        <dbReference type="ChEBI" id="CHEBI:57540"/>
    </ligand>
</feature>
<feature type="binding site" evidence="2">
    <location>
        <begin position="275"/>
        <end position="277"/>
    </location>
    <ligand>
        <name>NAD(+)</name>
        <dbReference type="ChEBI" id="CHEBI:57540"/>
    </ligand>
</feature>
<feature type="binding site" evidence="2">
    <location>
        <begin position="299"/>
        <end position="301"/>
    </location>
    <ligand>
        <name>NAD(+)</name>
        <dbReference type="ChEBI" id="CHEBI:57540"/>
    </ligand>
</feature>
<feature type="binding site" evidence="1">
    <location>
        <position position="301"/>
    </location>
    <ligand>
        <name>substrate</name>
    </ligand>
</feature>
<feature type="binding site" evidence="1">
    <location>
        <position position="302"/>
    </location>
    <ligand>
        <name>substrate</name>
    </ligand>
</feature>
<keyword id="KW-0479">Metal-binding</keyword>
<keyword id="KW-0520">NAD</keyword>
<keyword id="KW-0560">Oxidoreductase</keyword>
<keyword id="KW-1185">Reference proteome</keyword>
<keyword id="KW-0862">Zinc</keyword>
<accession>P35497</accession>
<accession>D6VWX7</accession>
<dbReference type="EC" id="1.1.1.-" evidence="3"/>
<dbReference type="EC" id="1.1.1.9" evidence="3"/>
<dbReference type="EMBL" id="L11039">
    <property type="protein sequence ID" value="AAA35027.1"/>
    <property type="molecule type" value="Genomic_DNA"/>
</dbReference>
<dbReference type="EMBL" id="Z49659">
    <property type="protein sequence ID" value="CAA89692.1"/>
    <property type="molecule type" value="Genomic_DNA"/>
</dbReference>
<dbReference type="EMBL" id="AY693012">
    <property type="protein sequence ID" value="AAT93031.1"/>
    <property type="molecule type" value="Genomic_DNA"/>
</dbReference>
<dbReference type="EMBL" id="BK006943">
    <property type="protein sequence ID" value="DAA08943.1"/>
    <property type="molecule type" value="Genomic_DNA"/>
</dbReference>
<dbReference type="PIR" id="S55941">
    <property type="entry name" value="S55941"/>
</dbReference>
<dbReference type="RefSeq" id="NP_012693.1">
    <property type="nucleotide sequence ID" value="NM_001181817.1"/>
</dbReference>
<dbReference type="SMR" id="P35497"/>
<dbReference type="BioGRID" id="33913">
    <property type="interactions" value="95"/>
</dbReference>
<dbReference type="DIP" id="DIP-1511N"/>
<dbReference type="FunCoup" id="P35497">
    <property type="interactions" value="675"/>
</dbReference>
<dbReference type="IntAct" id="P35497">
    <property type="interactions" value="7"/>
</dbReference>
<dbReference type="MINT" id="P35497"/>
<dbReference type="STRING" id="4932.YJR159W"/>
<dbReference type="GlyGen" id="P35497">
    <property type="glycosylation" value="1 site"/>
</dbReference>
<dbReference type="PaxDb" id="4932-YJR159W"/>
<dbReference type="PeptideAtlas" id="P35497"/>
<dbReference type="EnsemblFungi" id="YJR159W_mRNA">
    <property type="protein sequence ID" value="YJR159W"/>
    <property type="gene ID" value="YJR159W"/>
</dbReference>
<dbReference type="GeneID" id="853624"/>
<dbReference type="KEGG" id="sce:YJR159W"/>
<dbReference type="AGR" id="SGD:S000003920"/>
<dbReference type="SGD" id="S000003920">
    <property type="gene designation" value="SOR1"/>
</dbReference>
<dbReference type="VEuPathDB" id="FungiDB:YJR159W"/>
<dbReference type="eggNOG" id="KOG0024">
    <property type="taxonomic scope" value="Eukaryota"/>
</dbReference>
<dbReference type="GeneTree" id="ENSGT00390000004074"/>
<dbReference type="HOGENOM" id="CLU_026673_11_5_1"/>
<dbReference type="InParanoid" id="P35497"/>
<dbReference type="OMA" id="CSVGRPN"/>
<dbReference type="OrthoDB" id="3941538at2759"/>
<dbReference type="BioCyc" id="YEAST:YJR159W-MONOMER"/>
<dbReference type="BRENDA" id="1.1.1.14">
    <property type="organism ID" value="984"/>
</dbReference>
<dbReference type="Reactome" id="R-SCE-5652227">
    <property type="pathway name" value="Fructose biosynthesis"/>
</dbReference>
<dbReference type="Reactome" id="R-SCE-5661270">
    <property type="pathway name" value="Formation of xylulose-5-phosphate"/>
</dbReference>
<dbReference type="PRO" id="PR:P35497"/>
<dbReference type="Proteomes" id="UP000002311">
    <property type="component" value="Chromosome X"/>
</dbReference>
<dbReference type="RNAct" id="P35497">
    <property type="molecule type" value="protein"/>
</dbReference>
<dbReference type="GO" id="GO:0046526">
    <property type="term" value="F:D-xylulose reductase activity"/>
    <property type="evidence" value="ECO:0007669"/>
    <property type="project" value="UniProtKB-EC"/>
</dbReference>
<dbReference type="GO" id="GO:0003939">
    <property type="term" value="F:L-iditol 2-dehydrogenase (NAD+) activity"/>
    <property type="evidence" value="ECO:0000314"/>
    <property type="project" value="SGD"/>
</dbReference>
<dbReference type="GO" id="GO:0008270">
    <property type="term" value="F:zinc ion binding"/>
    <property type="evidence" value="ECO:0007669"/>
    <property type="project" value="InterPro"/>
</dbReference>
<dbReference type="GO" id="GO:0019318">
    <property type="term" value="P:hexose metabolic process"/>
    <property type="evidence" value="ECO:0000270"/>
    <property type="project" value="SGD"/>
</dbReference>
<dbReference type="GO" id="GO:0006062">
    <property type="term" value="P:sorbitol catabolic process"/>
    <property type="evidence" value="ECO:0000318"/>
    <property type="project" value="GO_Central"/>
</dbReference>
<dbReference type="CDD" id="cd05285">
    <property type="entry name" value="sorbitol_DH"/>
    <property type="match status" value="1"/>
</dbReference>
<dbReference type="FunFam" id="3.40.50.720:FF:000068">
    <property type="entry name" value="Sorbitol dehydrogenase"/>
    <property type="match status" value="1"/>
</dbReference>
<dbReference type="Gene3D" id="3.90.180.10">
    <property type="entry name" value="Medium-chain alcohol dehydrogenases, catalytic domain"/>
    <property type="match status" value="1"/>
</dbReference>
<dbReference type="Gene3D" id="3.40.50.720">
    <property type="entry name" value="NAD(P)-binding Rossmann-like Domain"/>
    <property type="match status" value="1"/>
</dbReference>
<dbReference type="InterPro" id="IPR013149">
    <property type="entry name" value="ADH-like_C"/>
</dbReference>
<dbReference type="InterPro" id="IPR013154">
    <property type="entry name" value="ADH-like_N"/>
</dbReference>
<dbReference type="InterPro" id="IPR002328">
    <property type="entry name" value="ADH_Zn_CS"/>
</dbReference>
<dbReference type="InterPro" id="IPR011032">
    <property type="entry name" value="GroES-like_sf"/>
</dbReference>
<dbReference type="InterPro" id="IPR036291">
    <property type="entry name" value="NAD(P)-bd_dom_sf"/>
</dbReference>
<dbReference type="InterPro" id="IPR020843">
    <property type="entry name" value="PKS_ER"/>
</dbReference>
<dbReference type="InterPro" id="IPR045306">
    <property type="entry name" value="SDH-like"/>
</dbReference>
<dbReference type="PANTHER" id="PTHR43161">
    <property type="entry name" value="SORBITOL DEHYDROGENASE"/>
    <property type="match status" value="1"/>
</dbReference>
<dbReference type="PANTHER" id="PTHR43161:SF9">
    <property type="entry name" value="SORBITOL DEHYDROGENASE"/>
    <property type="match status" value="1"/>
</dbReference>
<dbReference type="Pfam" id="PF08240">
    <property type="entry name" value="ADH_N"/>
    <property type="match status" value="1"/>
</dbReference>
<dbReference type="Pfam" id="PF00107">
    <property type="entry name" value="ADH_zinc_N"/>
    <property type="match status" value="1"/>
</dbReference>
<dbReference type="SMART" id="SM00829">
    <property type="entry name" value="PKS_ER"/>
    <property type="match status" value="1"/>
</dbReference>
<dbReference type="SUPFAM" id="SSF50129">
    <property type="entry name" value="GroES-like"/>
    <property type="match status" value="1"/>
</dbReference>
<dbReference type="SUPFAM" id="SSF51735">
    <property type="entry name" value="NAD(P)-binding Rossmann-fold domains"/>
    <property type="match status" value="1"/>
</dbReference>
<dbReference type="PROSITE" id="PS00059">
    <property type="entry name" value="ADH_ZINC"/>
    <property type="match status" value="1"/>
</dbReference>
<organism>
    <name type="scientific">Saccharomyces cerevisiae (strain ATCC 204508 / S288c)</name>
    <name type="common">Baker's yeast</name>
    <dbReference type="NCBI Taxonomy" id="559292"/>
    <lineage>
        <taxon>Eukaryota</taxon>
        <taxon>Fungi</taxon>
        <taxon>Dikarya</taxon>
        <taxon>Ascomycota</taxon>
        <taxon>Saccharomycotina</taxon>
        <taxon>Saccharomycetes</taxon>
        <taxon>Saccharomycetales</taxon>
        <taxon>Saccharomycetaceae</taxon>
        <taxon>Saccharomyces</taxon>
    </lineage>
</organism>
<evidence type="ECO:0000250" key="1">
    <source>
        <dbReference type="UniProtKB" id="P07846"/>
    </source>
</evidence>
<evidence type="ECO:0000250" key="2">
    <source>
        <dbReference type="UniProtKB" id="Q00796"/>
    </source>
</evidence>
<evidence type="ECO:0000269" key="3">
    <source>
    </source>
</evidence>
<evidence type="ECO:0000303" key="4">
    <source>
    </source>
</evidence>
<evidence type="ECO:0000305" key="5"/>
<evidence type="ECO:0000305" key="6">
    <source>
    </source>
</evidence>
<proteinExistence type="evidence at protein level"/>